<organism>
    <name type="scientific">Escherichia coli (strain SE11)</name>
    <dbReference type="NCBI Taxonomy" id="409438"/>
    <lineage>
        <taxon>Bacteria</taxon>
        <taxon>Pseudomonadati</taxon>
        <taxon>Pseudomonadota</taxon>
        <taxon>Gammaproteobacteria</taxon>
        <taxon>Enterobacterales</taxon>
        <taxon>Enterobacteriaceae</taxon>
        <taxon>Escherichia</taxon>
    </lineage>
</organism>
<sequence length="427" mass="49450">MTWFIDRRLNGKNKSMVNRQRFLRRYKAQIKQSISEAINKRSVTDVDSGESVSIPTEDISEPMFHQGRGGLRHRVHPGNDHFVQNDRIERPQGGGGGSGSGQGQASQDGEGQDEFVFQISKDEYLDLLFEDLALPNLKQNQQRQLTEYKTHRAGYTANGVPANISVVRSLQNSLARRTAMTAGKRRELHALEENLAIISNSEPAQLLEEERLRKEIAELRAKIERVPFIDTFDLRYKNYEKRPDPSSQAVMFCLMDVSGSMDQSTKDMAKRFYILLYLFLSRTYKNVEVVYIRHHTQAKEVDEHEFFYSQETGGTIVSSALKLMDEVVKERYNPAQWNIYAAQASDGDNWADDSPLCHEILAKKLLPVVRYYSYIEITRRAHQTLWREYEHLQSTFDNFAMQHIRDQDDIYPVFRELFHKQNATAKD</sequence>
<feature type="chain" id="PRO_1000139645" description="UPF0229 protein YeaH">
    <location>
        <begin position="1"/>
        <end position="427"/>
    </location>
</feature>
<feature type="region of interest" description="Disordered" evidence="2">
    <location>
        <begin position="79"/>
        <end position="110"/>
    </location>
</feature>
<feature type="compositionally biased region" description="Basic and acidic residues" evidence="2">
    <location>
        <begin position="79"/>
        <end position="90"/>
    </location>
</feature>
<feature type="compositionally biased region" description="Gly residues" evidence="2">
    <location>
        <begin position="92"/>
        <end position="102"/>
    </location>
</feature>
<gene>
    <name evidence="1" type="primary">yeaH</name>
    <name type="ordered locus">ECSE_1955</name>
</gene>
<proteinExistence type="inferred from homology"/>
<dbReference type="EMBL" id="AP009240">
    <property type="protein sequence ID" value="BAG77479.1"/>
    <property type="molecule type" value="Genomic_DNA"/>
</dbReference>
<dbReference type="RefSeq" id="WP_000219686.1">
    <property type="nucleotide sequence ID" value="NC_011415.1"/>
</dbReference>
<dbReference type="SMR" id="B6IBK5"/>
<dbReference type="KEGG" id="ecy:ECSE_1955"/>
<dbReference type="HOGENOM" id="CLU_049702_0_0_6"/>
<dbReference type="Proteomes" id="UP000008199">
    <property type="component" value="Chromosome"/>
</dbReference>
<dbReference type="HAMAP" id="MF_01232">
    <property type="entry name" value="UPF0229"/>
    <property type="match status" value="1"/>
</dbReference>
<dbReference type="InterPro" id="IPR006698">
    <property type="entry name" value="UPF0229"/>
</dbReference>
<dbReference type="NCBIfam" id="NF003707">
    <property type="entry name" value="PRK05325.1-2"/>
    <property type="match status" value="1"/>
</dbReference>
<dbReference type="NCBIfam" id="NF003708">
    <property type="entry name" value="PRK05325.1-3"/>
    <property type="match status" value="1"/>
</dbReference>
<dbReference type="PANTHER" id="PTHR30510">
    <property type="entry name" value="UPF0229 PROTEIN YEAH"/>
    <property type="match status" value="1"/>
</dbReference>
<dbReference type="PANTHER" id="PTHR30510:SF2">
    <property type="entry name" value="UPF0229 PROTEIN YEAH"/>
    <property type="match status" value="1"/>
</dbReference>
<dbReference type="Pfam" id="PF04285">
    <property type="entry name" value="DUF444"/>
    <property type="match status" value="1"/>
</dbReference>
<protein>
    <recommendedName>
        <fullName evidence="1">UPF0229 protein YeaH</fullName>
    </recommendedName>
</protein>
<comment type="similarity">
    <text evidence="1">Belongs to the UPF0229 family.</text>
</comment>
<reference key="1">
    <citation type="journal article" date="2008" name="DNA Res.">
        <title>Complete genome sequence and comparative analysis of the wild-type commensal Escherichia coli strain SE11 isolated from a healthy adult.</title>
        <authorList>
            <person name="Oshima K."/>
            <person name="Toh H."/>
            <person name="Ogura Y."/>
            <person name="Sasamoto H."/>
            <person name="Morita H."/>
            <person name="Park S.-H."/>
            <person name="Ooka T."/>
            <person name="Iyoda S."/>
            <person name="Taylor T.D."/>
            <person name="Hayashi T."/>
            <person name="Itoh K."/>
            <person name="Hattori M."/>
        </authorList>
    </citation>
    <scope>NUCLEOTIDE SEQUENCE [LARGE SCALE GENOMIC DNA]</scope>
    <source>
        <strain>SE11</strain>
    </source>
</reference>
<name>YEAH_ECOSE</name>
<evidence type="ECO:0000255" key="1">
    <source>
        <dbReference type="HAMAP-Rule" id="MF_01232"/>
    </source>
</evidence>
<evidence type="ECO:0000256" key="2">
    <source>
        <dbReference type="SAM" id="MobiDB-lite"/>
    </source>
</evidence>
<accession>B6IBK5</accession>